<organism>
    <name type="scientific">Thermobifida fusca (strain YX)</name>
    <dbReference type="NCBI Taxonomy" id="269800"/>
    <lineage>
        <taxon>Bacteria</taxon>
        <taxon>Bacillati</taxon>
        <taxon>Actinomycetota</taxon>
        <taxon>Actinomycetes</taxon>
        <taxon>Streptosporangiales</taxon>
        <taxon>Nocardiopsidaceae</taxon>
        <taxon>Thermobifida</taxon>
    </lineage>
</organism>
<proteinExistence type="inferred from homology"/>
<protein>
    <recommendedName>
        <fullName evidence="1">Uridylate kinase</fullName>
        <shortName evidence="1">UK</shortName>
        <ecNumber evidence="1">2.7.4.22</ecNumber>
    </recommendedName>
    <alternativeName>
        <fullName evidence="1">Uridine monophosphate kinase</fullName>
        <shortName evidence="1">UMP kinase</shortName>
        <shortName evidence="1">UMPK</shortName>
    </alternativeName>
</protein>
<sequence length="252" mass="26939">MPDNEGQHSVARRDGGWKRVVLKLSGEAFAGEEQLGISPKVVGYIAQAIAEAVAKGIQVAVVIGGGNMFRGAELSQGGMERSRADYMGMLGTVINCLALQDFLERLGIETRVQTAIHMSQVAEAYIPRRAIRHLEKGRVVIFGAGLGAPFFSTDTAAAQRALEIGAQAVLKGTQVDGVYDSDPRKNPAAVRFDRLDYNEVLTRGLKVMDATAVSLCMDNGLPIVVFDLMGKGNILRAVQGEKIGTIVCPPDV</sequence>
<accession>Q47S51</accession>
<reference key="1">
    <citation type="journal article" date="2007" name="J. Bacteriol.">
        <title>Genome sequence and analysis of the soil cellulolytic actinomycete Thermobifida fusca YX.</title>
        <authorList>
            <person name="Lykidis A."/>
            <person name="Mavromatis K."/>
            <person name="Ivanova N."/>
            <person name="Anderson I."/>
            <person name="Land M."/>
            <person name="DiBartolo G."/>
            <person name="Martinez M."/>
            <person name="Lapidus A."/>
            <person name="Lucas S."/>
            <person name="Copeland A."/>
            <person name="Richardson P."/>
            <person name="Wilson D.B."/>
            <person name="Kyrpides N."/>
        </authorList>
    </citation>
    <scope>NUCLEOTIDE SEQUENCE [LARGE SCALE GENOMIC DNA]</scope>
    <source>
        <strain>YX</strain>
    </source>
</reference>
<feature type="chain" id="PRO_0000323974" description="Uridylate kinase">
    <location>
        <begin position="1"/>
        <end position="252"/>
    </location>
</feature>
<feature type="binding site" evidence="1">
    <location>
        <begin position="23"/>
        <end position="26"/>
    </location>
    <ligand>
        <name>ATP</name>
        <dbReference type="ChEBI" id="CHEBI:30616"/>
    </ligand>
</feature>
<feature type="binding site" evidence="1">
    <location>
        <position position="65"/>
    </location>
    <ligand>
        <name>UMP</name>
        <dbReference type="ChEBI" id="CHEBI:57865"/>
    </ligand>
</feature>
<feature type="binding site" evidence="1">
    <location>
        <position position="66"/>
    </location>
    <ligand>
        <name>ATP</name>
        <dbReference type="ChEBI" id="CHEBI:30616"/>
    </ligand>
</feature>
<feature type="binding site" evidence="1">
    <location>
        <position position="70"/>
    </location>
    <ligand>
        <name>ATP</name>
        <dbReference type="ChEBI" id="CHEBI:30616"/>
    </ligand>
</feature>
<feature type="binding site" evidence="1">
    <location>
        <position position="85"/>
    </location>
    <ligand>
        <name>UMP</name>
        <dbReference type="ChEBI" id="CHEBI:57865"/>
    </ligand>
</feature>
<feature type="binding site" evidence="1">
    <location>
        <begin position="146"/>
        <end position="153"/>
    </location>
    <ligand>
        <name>UMP</name>
        <dbReference type="ChEBI" id="CHEBI:57865"/>
    </ligand>
</feature>
<feature type="binding site" evidence="1">
    <location>
        <position position="173"/>
    </location>
    <ligand>
        <name>ATP</name>
        <dbReference type="ChEBI" id="CHEBI:30616"/>
    </ligand>
</feature>
<feature type="binding site" evidence="1">
    <location>
        <position position="174"/>
    </location>
    <ligand>
        <name>ATP</name>
        <dbReference type="ChEBI" id="CHEBI:30616"/>
    </ligand>
</feature>
<feature type="binding site" evidence="1">
    <location>
        <position position="179"/>
    </location>
    <ligand>
        <name>ATP</name>
        <dbReference type="ChEBI" id="CHEBI:30616"/>
    </ligand>
</feature>
<feature type="binding site" evidence="1">
    <location>
        <position position="182"/>
    </location>
    <ligand>
        <name>ATP</name>
        <dbReference type="ChEBI" id="CHEBI:30616"/>
    </ligand>
</feature>
<gene>
    <name evidence="1" type="primary">pyrH</name>
    <name type="ordered locus">Tfu_0678</name>
</gene>
<name>PYRH_THEFY</name>
<evidence type="ECO:0000255" key="1">
    <source>
        <dbReference type="HAMAP-Rule" id="MF_01220"/>
    </source>
</evidence>
<dbReference type="EC" id="2.7.4.22" evidence="1"/>
<dbReference type="EMBL" id="CP000088">
    <property type="protein sequence ID" value="AAZ54716.1"/>
    <property type="molecule type" value="Genomic_DNA"/>
</dbReference>
<dbReference type="RefSeq" id="WP_011291125.1">
    <property type="nucleotide sequence ID" value="NC_007333.1"/>
</dbReference>
<dbReference type="SMR" id="Q47S51"/>
<dbReference type="STRING" id="269800.Tfu_0678"/>
<dbReference type="KEGG" id="tfu:Tfu_0678"/>
<dbReference type="eggNOG" id="COG0528">
    <property type="taxonomic scope" value="Bacteria"/>
</dbReference>
<dbReference type="HOGENOM" id="CLU_033861_0_0_11"/>
<dbReference type="OrthoDB" id="9807458at2"/>
<dbReference type="UniPathway" id="UPA00159">
    <property type="reaction ID" value="UER00275"/>
</dbReference>
<dbReference type="GO" id="GO:0005737">
    <property type="term" value="C:cytoplasm"/>
    <property type="evidence" value="ECO:0007669"/>
    <property type="project" value="UniProtKB-SubCell"/>
</dbReference>
<dbReference type="GO" id="GO:0005524">
    <property type="term" value="F:ATP binding"/>
    <property type="evidence" value="ECO:0007669"/>
    <property type="project" value="UniProtKB-KW"/>
</dbReference>
<dbReference type="GO" id="GO:0033862">
    <property type="term" value="F:UMP kinase activity"/>
    <property type="evidence" value="ECO:0007669"/>
    <property type="project" value="UniProtKB-EC"/>
</dbReference>
<dbReference type="GO" id="GO:0044210">
    <property type="term" value="P:'de novo' CTP biosynthetic process"/>
    <property type="evidence" value="ECO:0007669"/>
    <property type="project" value="UniProtKB-UniRule"/>
</dbReference>
<dbReference type="GO" id="GO:0006225">
    <property type="term" value="P:UDP biosynthetic process"/>
    <property type="evidence" value="ECO:0007669"/>
    <property type="project" value="TreeGrafter"/>
</dbReference>
<dbReference type="CDD" id="cd04254">
    <property type="entry name" value="AAK_UMPK-PyrH-Ec"/>
    <property type="match status" value="1"/>
</dbReference>
<dbReference type="FunFam" id="3.40.1160.10:FF:000001">
    <property type="entry name" value="Uridylate kinase"/>
    <property type="match status" value="1"/>
</dbReference>
<dbReference type="Gene3D" id="3.40.1160.10">
    <property type="entry name" value="Acetylglutamate kinase-like"/>
    <property type="match status" value="1"/>
</dbReference>
<dbReference type="HAMAP" id="MF_01220_B">
    <property type="entry name" value="PyrH_B"/>
    <property type="match status" value="1"/>
</dbReference>
<dbReference type="InterPro" id="IPR036393">
    <property type="entry name" value="AceGlu_kinase-like_sf"/>
</dbReference>
<dbReference type="InterPro" id="IPR001048">
    <property type="entry name" value="Asp/Glu/Uridylate_kinase"/>
</dbReference>
<dbReference type="InterPro" id="IPR011817">
    <property type="entry name" value="Uridylate_kinase"/>
</dbReference>
<dbReference type="InterPro" id="IPR015963">
    <property type="entry name" value="Uridylate_kinase_bac"/>
</dbReference>
<dbReference type="NCBIfam" id="TIGR02075">
    <property type="entry name" value="pyrH_bact"/>
    <property type="match status" value="1"/>
</dbReference>
<dbReference type="PANTHER" id="PTHR42833">
    <property type="entry name" value="URIDYLATE KINASE"/>
    <property type="match status" value="1"/>
</dbReference>
<dbReference type="PANTHER" id="PTHR42833:SF4">
    <property type="entry name" value="URIDYLATE KINASE PUMPKIN, CHLOROPLASTIC"/>
    <property type="match status" value="1"/>
</dbReference>
<dbReference type="Pfam" id="PF00696">
    <property type="entry name" value="AA_kinase"/>
    <property type="match status" value="1"/>
</dbReference>
<dbReference type="PIRSF" id="PIRSF005650">
    <property type="entry name" value="Uridylate_kin"/>
    <property type="match status" value="1"/>
</dbReference>
<dbReference type="SUPFAM" id="SSF53633">
    <property type="entry name" value="Carbamate kinase-like"/>
    <property type="match status" value="1"/>
</dbReference>
<comment type="function">
    <text evidence="1">Catalyzes the reversible phosphorylation of UMP to UDP.</text>
</comment>
<comment type="catalytic activity">
    <reaction evidence="1">
        <text>UMP + ATP = UDP + ADP</text>
        <dbReference type="Rhea" id="RHEA:24400"/>
        <dbReference type="ChEBI" id="CHEBI:30616"/>
        <dbReference type="ChEBI" id="CHEBI:57865"/>
        <dbReference type="ChEBI" id="CHEBI:58223"/>
        <dbReference type="ChEBI" id="CHEBI:456216"/>
        <dbReference type="EC" id="2.7.4.22"/>
    </reaction>
</comment>
<comment type="activity regulation">
    <text evidence="1">Inhibited by UTP.</text>
</comment>
<comment type="pathway">
    <text evidence="1">Pyrimidine metabolism; CTP biosynthesis via de novo pathway; UDP from UMP (UMPK route): step 1/1.</text>
</comment>
<comment type="subunit">
    <text evidence="1">Homohexamer.</text>
</comment>
<comment type="subcellular location">
    <subcellularLocation>
        <location evidence="1">Cytoplasm</location>
    </subcellularLocation>
</comment>
<comment type="similarity">
    <text evidence="1">Belongs to the UMP kinase family.</text>
</comment>
<keyword id="KW-0067">ATP-binding</keyword>
<keyword id="KW-0963">Cytoplasm</keyword>
<keyword id="KW-0418">Kinase</keyword>
<keyword id="KW-0547">Nucleotide-binding</keyword>
<keyword id="KW-0665">Pyrimidine biosynthesis</keyword>
<keyword id="KW-0808">Transferase</keyword>